<keyword id="KW-0027">Amidation</keyword>
<keyword id="KW-0903">Direct protein sequencing</keyword>
<keyword id="KW-1015">Disulfide bond</keyword>
<keyword id="KW-0872">Ion channel impairing toxin</keyword>
<keyword id="KW-0960">Knottin</keyword>
<keyword id="KW-0528">Neurotoxin</keyword>
<keyword id="KW-0964">Secreted</keyword>
<keyword id="KW-0800">Toxin</keyword>
<keyword id="KW-0738">Voltage-gated sodium channel impairing toxin</keyword>
<feature type="peptide" id="PRO_0000352650" description="Mu-thomitoxin-Hme1a">
    <location>
        <begin position="1"/>
        <end position="37"/>
    </location>
</feature>
<feature type="modified residue" description="Phenylalanine amide" evidence="2 3">
    <location>
        <position position="37"/>
    </location>
</feature>
<feature type="disulfide bond" evidence="1">
    <location>
        <begin position="2"/>
        <end position="18"/>
    </location>
</feature>
<feature type="disulfide bond" evidence="1">
    <location>
        <begin position="9"/>
        <end position="22"/>
    </location>
</feature>
<feature type="disulfide bond" evidence="1">
    <location>
        <begin position="17"/>
        <end position="33"/>
    </location>
</feature>
<protein>
    <recommendedName>
        <fullName evidence="5">Mu-thomitoxin-Hme1a</fullName>
        <shortName evidence="5">Mu-TMTX-Hme1a</shortName>
    </recommendedName>
    <alternativeName>
        <fullName evidence="4">Neurotoxin Hm-1</fullName>
    </alternativeName>
</protein>
<accession>P85505</accession>
<proteinExistence type="evidence at protein level"/>
<dbReference type="SMR" id="P85505"/>
<dbReference type="ArachnoServer" id="AS000759">
    <property type="toxin name" value="mu-thomitoxin-Hme1a"/>
</dbReference>
<dbReference type="GO" id="GO:0005576">
    <property type="term" value="C:extracellular region"/>
    <property type="evidence" value="ECO:0007669"/>
    <property type="project" value="UniProtKB-SubCell"/>
</dbReference>
<dbReference type="GO" id="GO:0017080">
    <property type="term" value="F:sodium channel regulator activity"/>
    <property type="evidence" value="ECO:0007669"/>
    <property type="project" value="UniProtKB-KW"/>
</dbReference>
<dbReference type="GO" id="GO:0090729">
    <property type="term" value="F:toxin activity"/>
    <property type="evidence" value="ECO:0007669"/>
    <property type="project" value="UniProtKB-KW"/>
</dbReference>
<organism>
    <name type="scientific">Heriaeus mellotteei</name>
    <name type="common">Crab spider</name>
    <name type="synonym">Heriaeus oblongus</name>
    <dbReference type="NCBI Taxonomy" id="2337432"/>
    <lineage>
        <taxon>Eukaryota</taxon>
        <taxon>Metazoa</taxon>
        <taxon>Ecdysozoa</taxon>
        <taxon>Arthropoda</taxon>
        <taxon>Chelicerata</taxon>
        <taxon>Arachnida</taxon>
        <taxon>Araneae</taxon>
        <taxon>Araneomorphae</taxon>
        <taxon>Entelegynae</taxon>
        <taxon>Dionycha</taxon>
        <taxon>Thomisidae</taxon>
        <taxon>Heriaeus</taxon>
    </lineage>
</organism>
<reference key="1">
    <citation type="journal article" date="2008" name="Toxicon">
        <title>Two novel sodium channel inhibitors from Heriaeus melloteei spider venom differentially interacting with mammalian channel's isoforms.</title>
        <authorList>
            <person name="Billen B."/>
            <person name="Vassilevski A."/>
            <person name="Nikolsky A."/>
            <person name="Tytgat J."/>
            <person name="Grishin E."/>
        </authorList>
    </citation>
    <scope>PROTEIN SEQUENCE</scope>
    <scope>FUNCTION</scope>
    <scope>DISULFIDE BONDS</scope>
    <scope>MASS SPECTROMETRY</scope>
    <scope>AMIDATION AT PHE-37</scope>
    <source>
        <tissue>Venom</tissue>
    </source>
</reference>
<reference key="2">
    <citation type="journal article" date="2009" name="Biochemistry (Mosc.) Suppl. Series A">
        <title>Voltage-gated sodium channels are targets for toxins from the venom of the spider Heriaeus melloteei.</title>
        <authorList>
            <person name="Nikolsky A."/>
            <person name="Billen B."/>
            <person name="Vassilevski A."/>
            <person name="Filkin S."/>
            <person name="Tytgat J."/>
            <person name="Grishin E."/>
        </authorList>
    </citation>
    <scope>PROTEIN SEQUENCE</scope>
    <scope>FUNCTION</scope>
    <scope>DISULFIDE BONDS</scope>
    <scope>MASS SPECTROMETRY</scope>
    <scope>AMIDATION AT PHE-37</scope>
    <source>
        <tissue>Venom</tissue>
    </source>
</reference>
<comment type="function">
    <text evidence="2 3">Blocks the Nav1.2/SCN2A, Nav1.4/SCN4A, and Nav1.6/SCN8A sodium channels. Reduces the peak amplitude of the sodium current and negatively shifts the steady-state inactivation process. Does not shift the threshold potential of activation or the voltage corresponding to maximal current. Does not change the reversal potential of the sodium current. May act on site 1 of the receptor.</text>
</comment>
<comment type="subcellular location">
    <subcellularLocation>
        <location evidence="2">Secreted</location>
    </subcellularLocation>
</comment>
<comment type="tissue specificity">
    <text evidence="5">Expressed by the venom gland.</text>
</comment>
<comment type="domain">
    <text evidence="1">The presence of a 'disulfide through disulfide knot' structurally defines this protein as a knottin.</text>
</comment>
<comment type="PTM">
    <text>Contains 3 disulfide bonds.</text>
</comment>
<comment type="mass spectrometry"/>
<comment type="miscellaneous">
    <text>Negative results: does not inhibit the sodium channel Nav1.8/SCN10A sodium channel.</text>
</comment>
<comment type="similarity">
    <text evidence="5">Belongs to the neurotoxin 01 (U2-agtx) family.</text>
</comment>
<name>TXHM1_HERML</name>
<evidence type="ECO:0000250" key="1">
    <source>
        <dbReference type="UniProtKB" id="P31328"/>
    </source>
</evidence>
<evidence type="ECO:0000269" key="2">
    <source>
    </source>
</evidence>
<evidence type="ECO:0000269" key="3">
    <source ref="2"/>
</evidence>
<evidence type="ECO:0000303" key="4">
    <source>
    </source>
</evidence>
<evidence type="ECO:0000305" key="5"/>
<sequence>GCIPYGKTCEFWSGPWCCAGKCKLNVWSMTLSCTRNF</sequence>